<proteinExistence type="evidence at transcript level"/>
<feature type="signal peptide" evidence="1">
    <location>
        <begin position="1"/>
        <end position="23"/>
    </location>
</feature>
<feature type="chain" id="PRO_0000420456" description="Hyaluronidase">
    <location>
        <begin position="24"/>
        <end position="449"/>
    </location>
</feature>
<feature type="domain" description="EGF-like">
    <location>
        <begin position="427"/>
        <end position="438"/>
    </location>
</feature>
<feature type="active site" description="Proton donor" evidence="1">
    <location>
        <position position="135"/>
    </location>
</feature>
<feature type="glycosylation site" description="N-linked (GlcNAc...) asparagine" evidence="2">
    <location>
        <position position="67"/>
    </location>
</feature>
<feature type="glycosylation site" description="N-linked (GlcNAc...) asparagine" evidence="2">
    <location>
        <position position="103"/>
    </location>
</feature>
<feature type="glycosylation site" description="N-linked (GlcNAc...) asparagine" evidence="2">
    <location>
        <position position="153"/>
    </location>
</feature>
<feature type="glycosylation site" description="N-linked (GlcNAc...) asparagine" evidence="2">
    <location>
        <position position="357"/>
    </location>
</feature>
<feature type="glycosylation site" description="N-linked (GlcNAc...) asparagine" evidence="2">
    <location>
        <position position="401"/>
    </location>
</feature>
<feature type="disulfide bond" evidence="1">
    <location>
        <begin position="47"/>
        <end position="340"/>
    </location>
</feature>
<feature type="disulfide bond" evidence="1">
    <location>
        <begin position="211"/>
        <end position="227"/>
    </location>
</feature>
<feature type="disulfide bond" evidence="1">
    <location>
        <begin position="365"/>
        <end position="376"/>
    </location>
</feature>
<feature type="disulfide bond" evidence="1">
    <location>
        <begin position="370"/>
        <end position="427"/>
    </location>
</feature>
<feature type="disulfide bond" evidence="1">
    <location>
        <begin position="429"/>
        <end position="438"/>
    </location>
</feature>
<name>HYAL_ECHOC</name>
<protein>
    <recommendedName>
        <fullName>Hyaluronidase</fullName>
        <shortName>Hy</shortName>
        <ecNumber>3.2.1.35</ecNumber>
    </recommendedName>
    <alternativeName>
        <fullName>Hyaluronoglucosaminidase</fullName>
    </alternativeName>
    <alternativeName>
        <fullName>Venom spreading factor</fullName>
    </alternativeName>
</protein>
<organism>
    <name type="scientific">Echis ocellatus</name>
    <name type="common">Ocellated saw-scaled viper</name>
    <dbReference type="NCBI Taxonomy" id="99586"/>
    <lineage>
        <taxon>Eukaryota</taxon>
        <taxon>Metazoa</taxon>
        <taxon>Chordata</taxon>
        <taxon>Craniata</taxon>
        <taxon>Vertebrata</taxon>
        <taxon>Euteleostomi</taxon>
        <taxon>Lepidosauria</taxon>
        <taxon>Squamata</taxon>
        <taxon>Bifurcata</taxon>
        <taxon>Unidentata</taxon>
        <taxon>Episquamata</taxon>
        <taxon>Toxicofera</taxon>
        <taxon>Serpentes</taxon>
        <taxon>Colubroidea</taxon>
        <taxon>Viperidae</taxon>
        <taxon>Viperinae</taxon>
        <taxon>Echis</taxon>
    </lineage>
</organism>
<sequence>MYHLWIKCLAAWIFLKRFNGVHVMHAKAPMYPNEPFLVFWNAPTTQCRLRYKVDLDLKTFHIVANANDTLSGSAVTIFYPTHLGIYPHIDDRGHFFHGIIPQNESLTKHLDKSKSDINRIIPLKTFHGLGVIDWENWRPQWDRNWGNKNVYRNRSIQFARDLHPELSENKIRRLAKAEYEKAAKSFMRDTLLLAEEMRPDGYWGYYLYPDCQNYDYKTKGDQYTGKCPDIEMSRNDQLLWLWRESTALFPNVYLEIILRSSDNALKFVHHRLKESMRIASMAREDYALPVFVYARPFYAYTFEPLTQEDLVTTVGETAAMGAAGIVFWGSMQYASTVDSCQKVKKYMNGPLGRYIINVTTAAKICSHALCRKNGRCVRKHSDSNAFLHLFPESFRIMVHANATEKKVIVKGKLELENLIYLRENFMCQCYQGWQGLYCEEYSIKDIRKI</sequence>
<keyword id="KW-1015">Disulfide bond</keyword>
<keyword id="KW-0245">EGF-like domain</keyword>
<keyword id="KW-0325">Glycoprotein</keyword>
<keyword id="KW-0326">Glycosidase</keyword>
<keyword id="KW-0378">Hydrolase</keyword>
<keyword id="KW-0964">Secreted</keyword>
<keyword id="KW-0732">Signal</keyword>
<evidence type="ECO:0000250" key="1"/>
<evidence type="ECO:0000255" key="2"/>
<evidence type="ECO:0000305" key="3"/>
<accession>A3QVN2</accession>
<reference key="1">
    <citation type="journal article" date="2007" name="Gene">
        <title>Identification of cDNAs encoding viper venom hyaluronidases: cross-generic sequence conservation of full-length and unusually short variant transcripts.</title>
        <authorList>
            <person name="Harrison R.A."/>
            <person name="Ibison F."/>
            <person name="Wilbraham D."/>
            <person name="Wagstaff S.C."/>
        </authorList>
    </citation>
    <scope>NUCLEOTIDE SEQUENCE [MRNA]</scope>
    <source>
        <tissue>Venom gland</tissue>
    </source>
</reference>
<dbReference type="EC" id="3.2.1.35"/>
<dbReference type="EMBL" id="DQ840249">
    <property type="protein sequence ID" value="ABI33937.1"/>
    <property type="molecule type" value="mRNA"/>
</dbReference>
<dbReference type="SMR" id="A3QVN2"/>
<dbReference type="CAZy" id="GH56">
    <property type="family name" value="Glycoside Hydrolase Family 56"/>
</dbReference>
<dbReference type="GO" id="GO:0031410">
    <property type="term" value="C:cytoplasmic vesicle"/>
    <property type="evidence" value="ECO:0007669"/>
    <property type="project" value="TreeGrafter"/>
</dbReference>
<dbReference type="GO" id="GO:0005576">
    <property type="term" value="C:extracellular region"/>
    <property type="evidence" value="ECO:0007669"/>
    <property type="project" value="UniProtKB-SubCell"/>
</dbReference>
<dbReference type="GO" id="GO:0004415">
    <property type="term" value="F:hyalurononglucosaminidase activity"/>
    <property type="evidence" value="ECO:0007669"/>
    <property type="project" value="UniProtKB-EC"/>
</dbReference>
<dbReference type="GO" id="GO:0005975">
    <property type="term" value="P:carbohydrate metabolic process"/>
    <property type="evidence" value="ECO:0007669"/>
    <property type="project" value="InterPro"/>
</dbReference>
<dbReference type="GO" id="GO:0030214">
    <property type="term" value="P:hyaluronan catabolic process"/>
    <property type="evidence" value="ECO:0007669"/>
    <property type="project" value="TreeGrafter"/>
</dbReference>
<dbReference type="FunFam" id="3.20.20.70:FF:000065">
    <property type="entry name" value="Hyaluronidase"/>
    <property type="match status" value="1"/>
</dbReference>
<dbReference type="Gene3D" id="3.20.20.70">
    <property type="entry name" value="Aldolase class I"/>
    <property type="match status" value="1"/>
</dbReference>
<dbReference type="InterPro" id="IPR013785">
    <property type="entry name" value="Aldolase_TIM"/>
</dbReference>
<dbReference type="InterPro" id="IPR017853">
    <property type="entry name" value="Glycoside_hydrolase_SF"/>
</dbReference>
<dbReference type="InterPro" id="IPR018155">
    <property type="entry name" value="Hyaluronidase"/>
</dbReference>
<dbReference type="PANTHER" id="PTHR11769">
    <property type="entry name" value="HYALURONIDASE"/>
    <property type="match status" value="1"/>
</dbReference>
<dbReference type="PANTHER" id="PTHR11769:SF9">
    <property type="entry name" value="HYALURONIDASE"/>
    <property type="match status" value="1"/>
</dbReference>
<dbReference type="Pfam" id="PF01630">
    <property type="entry name" value="Glyco_hydro_56"/>
    <property type="match status" value="1"/>
</dbReference>
<dbReference type="PIRSF" id="PIRSF038193">
    <property type="entry name" value="Hyaluronidase"/>
    <property type="match status" value="1"/>
</dbReference>
<dbReference type="PRINTS" id="PR00846">
    <property type="entry name" value="GLHYDRLASE56"/>
</dbReference>
<dbReference type="SUPFAM" id="SSF51445">
    <property type="entry name" value="(Trans)glycosidases"/>
    <property type="match status" value="1"/>
</dbReference>
<dbReference type="PROSITE" id="PS00022">
    <property type="entry name" value="EGF_1"/>
    <property type="match status" value="1"/>
</dbReference>
<dbReference type="PROSITE" id="PS01186">
    <property type="entry name" value="EGF_2"/>
    <property type="match status" value="1"/>
</dbReference>
<comment type="function">
    <text evidence="1">Snake venom endo-hyaluronidase that degrades hyaluronan to smaller oligosaccharide fragments. In venom, it is not toxic by itself, but increases the diffusion of other venom proteins by degrading the extracellular matrix. In addition, it displays antiedematogenic activity (By similarity).</text>
</comment>
<comment type="catalytic activity">
    <reaction>
        <text>Random hydrolysis of (1-&gt;4)-linkages between N-acetyl-beta-D-glucosamine and D-glucuronate residues in hyaluronate.</text>
        <dbReference type="EC" id="3.2.1.35"/>
    </reaction>
</comment>
<comment type="subunit">
    <text evidence="1">Monomer.</text>
</comment>
<comment type="subcellular location">
    <subcellularLocation>
        <location evidence="1">Secreted</location>
    </subcellularLocation>
</comment>
<comment type="tissue specificity">
    <text>Expressed by the venom gland.</text>
</comment>
<comment type="similarity">
    <text evidence="3">Belongs to the glycosyl hydrolase 56 family.</text>
</comment>